<proteinExistence type="inferred from homology"/>
<sequence length="181" mass="18790">METVDTVVWALWAMLPAYIPNNAAVLAGGGRPIDGGRTWGGRRVLGDGKTWRGTLIGTAAGTALALGLTQVTPSVSAALGTDLPTFSLRAGLGLAFGAMLGDIGASFLKRRTGRERGAAFPGLDQLDFVVGALLCAFVAAPSWFTETFTLPVLVVVVVATPVLHVVTNGIAYLLGLKNEPW</sequence>
<keyword id="KW-1003">Cell membrane</keyword>
<keyword id="KW-0444">Lipid biosynthesis</keyword>
<keyword id="KW-0443">Lipid metabolism</keyword>
<keyword id="KW-0460">Magnesium</keyword>
<keyword id="KW-0472">Membrane</keyword>
<keyword id="KW-0594">Phospholipid biosynthesis</keyword>
<keyword id="KW-1208">Phospholipid metabolism</keyword>
<keyword id="KW-1185">Reference proteome</keyword>
<keyword id="KW-0808">Transferase</keyword>
<keyword id="KW-0812">Transmembrane</keyword>
<keyword id="KW-1133">Transmembrane helix</keyword>
<feature type="chain" id="PRO_0000298273" description="CDP-archaeol synthase">
    <location>
        <begin position="1"/>
        <end position="181"/>
    </location>
</feature>
<feature type="transmembrane region" description="Helical" evidence="1">
    <location>
        <begin position="7"/>
        <end position="27"/>
    </location>
</feature>
<feature type="transmembrane region" description="Helical" evidence="1">
    <location>
        <begin position="55"/>
        <end position="75"/>
    </location>
</feature>
<feature type="transmembrane region" description="Helical" evidence="1">
    <location>
        <begin position="88"/>
        <end position="108"/>
    </location>
</feature>
<feature type="transmembrane region" description="Helical" evidence="1">
    <location>
        <begin position="126"/>
        <end position="146"/>
    </location>
</feature>
<feature type="transmembrane region" description="Helical" evidence="1">
    <location>
        <begin position="147"/>
        <end position="167"/>
    </location>
</feature>
<protein>
    <recommendedName>
        <fullName evidence="1">CDP-archaeol synthase</fullName>
        <ecNumber evidence="1">2.7.7.67</ecNumber>
    </recommendedName>
    <alternativeName>
        <fullName evidence="1">CDP-2,3-bis-(O-geranylgeranyl)-sn-glycerol synthase</fullName>
    </alternativeName>
</protein>
<dbReference type="EC" id="2.7.7.67" evidence="1"/>
<dbReference type="EMBL" id="AY596297">
    <property type="protein sequence ID" value="AAV47799.1"/>
    <property type="molecule type" value="Genomic_DNA"/>
</dbReference>
<dbReference type="RefSeq" id="WP_011224609.1">
    <property type="nucleotide sequence ID" value="NC_006396.1"/>
</dbReference>
<dbReference type="SMR" id="Q5UY54"/>
<dbReference type="STRING" id="272569.rrnAC3084"/>
<dbReference type="PaxDb" id="272569-rrnAC3084"/>
<dbReference type="EnsemblBacteria" id="AAV47799">
    <property type="protein sequence ID" value="AAV47799"/>
    <property type="gene ID" value="rrnAC3084"/>
</dbReference>
<dbReference type="GeneID" id="40153898"/>
<dbReference type="KEGG" id="hma:rrnAC3084"/>
<dbReference type="PATRIC" id="fig|272569.17.peg.3628"/>
<dbReference type="eggNOG" id="arCOG04106">
    <property type="taxonomic scope" value="Archaea"/>
</dbReference>
<dbReference type="HOGENOM" id="CLU_105710_0_0_2"/>
<dbReference type="UniPathway" id="UPA00940"/>
<dbReference type="Proteomes" id="UP000001169">
    <property type="component" value="Chromosome I"/>
</dbReference>
<dbReference type="GO" id="GO:0005886">
    <property type="term" value="C:plasma membrane"/>
    <property type="evidence" value="ECO:0007669"/>
    <property type="project" value="UniProtKB-SubCell"/>
</dbReference>
<dbReference type="GO" id="GO:0043338">
    <property type="term" value="F:CDP-2,3-bis-(O-geranylgeranyl)-sn-glycerol synthase activity"/>
    <property type="evidence" value="ECO:0007669"/>
    <property type="project" value="UniProtKB-EC"/>
</dbReference>
<dbReference type="GO" id="GO:0046474">
    <property type="term" value="P:glycerophospholipid biosynthetic process"/>
    <property type="evidence" value="ECO:0007669"/>
    <property type="project" value="UniProtKB-UniRule"/>
</dbReference>
<dbReference type="HAMAP" id="MF_01117">
    <property type="entry name" value="CDP_archaeol_synth"/>
    <property type="match status" value="1"/>
</dbReference>
<dbReference type="InterPro" id="IPR032690">
    <property type="entry name" value="CarS"/>
</dbReference>
<dbReference type="InterPro" id="IPR002726">
    <property type="entry name" value="CarS_archaea"/>
</dbReference>
<dbReference type="NCBIfam" id="NF003114">
    <property type="entry name" value="PRK04032.1"/>
    <property type="match status" value="1"/>
</dbReference>
<dbReference type="PANTHER" id="PTHR39650">
    <property type="entry name" value="CDP-ARCHAEOL SYNTHASE"/>
    <property type="match status" value="1"/>
</dbReference>
<dbReference type="PANTHER" id="PTHR39650:SF1">
    <property type="entry name" value="CDP-ARCHAEOL SYNTHASE"/>
    <property type="match status" value="1"/>
</dbReference>
<dbReference type="Pfam" id="PF01864">
    <property type="entry name" value="CarS-like"/>
    <property type="match status" value="1"/>
</dbReference>
<comment type="function">
    <text evidence="1">Catalyzes the formation of CDP-2,3-bis-(O-geranylgeranyl)-sn-glycerol (CDP-archaeol) from 2,3-bis-(O-geranylgeranyl)-sn-glycerol 1-phosphate (DGGGP) and CTP. This reaction is the third ether-bond-formation step in the biosynthesis of archaeal membrane lipids.</text>
</comment>
<comment type="catalytic activity">
    <reaction evidence="1">
        <text>2,3-bis-O-(geranylgeranyl)-sn-glycerol 1-phosphate + CTP + H(+) = CDP-2,3-bis-O-(geranylgeranyl)-sn-glycerol + diphosphate</text>
        <dbReference type="Rhea" id="RHEA:25690"/>
        <dbReference type="ChEBI" id="CHEBI:15378"/>
        <dbReference type="ChEBI" id="CHEBI:33019"/>
        <dbReference type="ChEBI" id="CHEBI:37563"/>
        <dbReference type="ChEBI" id="CHEBI:58837"/>
        <dbReference type="ChEBI" id="CHEBI:58838"/>
        <dbReference type="EC" id="2.7.7.67"/>
    </reaction>
</comment>
<comment type="cofactor">
    <cofactor evidence="1">
        <name>Mg(2+)</name>
        <dbReference type="ChEBI" id="CHEBI:18420"/>
    </cofactor>
</comment>
<comment type="pathway">
    <text evidence="1">Membrane lipid metabolism; glycerophospholipid metabolism.</text>
</comment>
<comment type="subcellular location">
    <subcellularLocation>
        <location evidence="1">Cell membrane</location>
        <topology evidence="1">Multi-pass membrane protein</topology>
    </subcellularLocation>
</comment>
<comment type="similarity">
    <text evidence="1">Belongs to the CDP-archaeol synthase family.</text>
</comment>
<reference key="1">
    <citation type="journal article" date="2004" name="Genome Res.">
        <title>Genome sequence of Haloarcula marismortui: a halophilic archaeon from the Dead Sea.</title>
        <authorList>
            <person name="Baliga N.S."/>
            <person name="Bonneau R."/>
            <person name="Facciotti M.T."/>
            <person name="Pan M."/>
            <person name="Glusman G."/>
            <person name="Deutsch E.W."/>
            <person name="Shannon P."/>
            <person name="Chiu Y."/>
            <person name="Weng R.S."/>
            <person name="Gan R.R."/>
            <person name="Hung P."/>
            <person name="Date S.V."/>
            <person name="Marcotte E."/>
            <person name="Hood L."/>
            <person name="Ng W.V."/>
        </authorList>
    </citation>
    <scope>NUCLEOTIDE SEQUENCE [LARGE SCALE GENOMIC DNA]</scope>
    <source>
        <strain>ATCC 43049 / DSM 3752 / JCM 8966 / VKM B-1809</strain>
    </source>
</reference>
<evidence type="ECO:0000255" key="1">
    <source>
        <dbReference type="HAMAP-Rule" id="MF_01117"/>
    </source>
</evidence>
<name>CDPAS_HALMA</name>
<organism>
    <name type="scientific">Haloarcula marismortui (strain ATCC 43049 / DSM 3752 / JCM 8966 / VKM B-1809)</name>
    <name type="common">Halobacterium marismortui</name>
    <dbReference type="NCBI Taxonomy" id="272569"/>
    <lineage>
        <taxon>Archaea</taxon>
        <taxon>Methanobacteriati</taxon>
        <taxon>Methanobacteriota</taxon>
        <taxon>Stenosarchaea group</taxon>
        <taxon>Halobacteria</taxon>
        <taxon>Halobacteriales</taxon>
        <taxon>Haloarculaceae</taxon>
        <taxon>Haloarcula</taxon>
    </lineage>
</organism>
<accession>Q5UY54</accession>
<gene>
    <name evidence="1" type="primary">carS</name>
    <name type="ordered locus">rrnAC3084</name>
</gene>